<gene>
    <name evidence="6" type="primary">eIF4E</name>
</gene>
<name>IF4E1_CITLA</name>
<reference key="1">
    <citation type="journal article" date="2009" name="Theor. Appl. Genet.">
        <title>Non-synonymous single nucleotide polymorphisms in the watermelon eIF4E gene are closely associated with resistance to zucchini yellow mosaic virus.</title>
        <authorList>
            <person name="Ling K.-S."/>
            <person name="Harris K.R."/>
            <person name="Meyer J.D.F."/>
            <person name="Levi A."/>
            <person name="Guner N."/>
            <person name="Wehner T.C."/>
            <person name="Bendahmane A."/>
            <person name="Havey M.J."/>
        </authorList>
    </citation>
    <scope>NUCLEOTIDE SEQUENCE [GENOMIC DNA / MRNA]</scope>
    <scope>VARIANT PRO-81</scope>
    <scope>FUNCTION</scope>
    <scope>FUNCTION (MICROBIAL INFECTION)</scope>
    <scope>SUBUNIT (MICROBIAL INFECTION)</scope>
    <scope>POLYMORPHISM</scope>
    <source>
        <strain>cv. New Hampshire Midget</strain>
        <strain>cv. PI 595203</strain>
    </source>
</reference>
<reference key="2">
    <citation type="submission" date="2014-02" db="EMBL/GenBank/DDBJ databases">
        <title>Cloning of the eIF4E and eIFiso4E Gene Prokaryotic Expression and Antiserum Preparation of watermelon.</title>
        <authorList>
            <person name="Hao X."/>
        </authorList>
    </citation>
    <scope>NUCLEOTIDE SEQUENCE [GENOMIC DNA]</scope>
</reference>
<reference key="3">
    <citation type="journal article" date="2014" name="Infect. Genet. Evol.">
        <title>Evolution of plant eukaryotic initiation factor 4E (eIF4E) and potyvirus genome-linked protein (VPg): a game of mirrors impacting resistance spectrum and durability.</title>
        <authorList>
            <person name="Moury B."/>
            <person name="Charron C."/>
            <person name="Janzac B."/>
            <person name="Simon V."/>
            <person name="Gallois J.L."/>
            <person name="Palloix A."/>
            <person name="Caranta C."/>
        </authorList>
    </citation>
    <scope>GENE FAMILY</scope>
    <scope>REVIEW</scope>
</reference>
<sequence>MVVEETIKATSTEDLSNTIANQNPRGRGGDEDEELEEGEIVGDDDLDSSNLSAAIVHQPHPLEHSWTFWFDNPSAKSKQATWGASIRPIYTFSTVEEFWSVYNNIHHPSKLALRADLYCFKHKIEPKWEDPVCANGGKWTVNFSRGKSDNGWLYTLLAMIGEQFDCGDEICGAVVNVRSGQDKISIWTKNASNEAAQASIGKQWKEFLDYNDSIGFIFHEDAKKFDRHAKNKYSV</sequence>
<evidence type="ECO:0000250" key="1">
    <source>
        <dbReference type="UniProtKB" id="C6ZJZ3"/>
    </source>
</evidence>
<evidence type="ECO:0000250" key="2">
    <source>
        <dbReference type="UniProtKB" id="P29557"/>
    </source>
</evidence>
<evidence type="ECO:0000250" key="3">
    <source>
        <dbReference type="UniProtKB" id="Q00LS8"/>
    </source>
</evidence>
<evidence type="ECO:0000256" key="4">
    <source>
        <dbReference type="SAM" id="MobiDB-lite"/>
    </source>
</evidence>
<evidence type="ECO:0000269" key="5">
    <source>
    </source>
</evidence>
<evidence type="ECO:0000303" key="6">
    <source>
    </source>
</evidence>
<evidence type="ECO:0000305" key="7"/>
<evidence type="ECO:0000305" key="8">
    <source>
    </source>
</evidence>
<organism>
    <name type="scientific">Citrullus lanatus</name>
    <name type="common">Watermelon</name>
    <name type="synonym">Citrullus vulgaris</name>
    <dbReference type="NCBI Taxonomy" id="3654"/>
    <lineage>
        <taxon>Eukaryota</taxon>
        <taxon>Viridiplantae</taxon>
        <taxon>Streptophyta</taxon>
        <taxon>Embryophyta</taxon>
        <taxon>Tracheophyta</taxon>
        <taxon>Spermatophyta</taxon>
        <taxon>Magnoliopsida</taxon>
        <taxon>eudicotyledons</taxon>
        <taxon>Gunneridae</taxon>
        <taxon>Pentapetalae</taxon>
        <taxon>rosids</taxon>
        <taxon>fabids</taxon>
        <taxon>Cucurbitales</taxon>
        <taxon>Cucurbitaceae</taxon>
        <taxon>Benincaseae</taxon>
        <taxon>Citrullus</taxon>
    </lineage>
</organism>
<feature type="chain" id="PRO_0000454065" description="Eukaryotic translation initiation factor 4E-1">
    <location>
        <begin position="1"/>
        <end position="235"/>
    </location>
</feature>
<feature type="region of interest" description="Disordered" evidence="4">
    <location>
        <begin position="1"/>
        <end position="36"/>
    </location>
</feature>
<feature type="region of interest" description="EIF4G-binding" evidence="3">
    <location>
        <begin position="60"/>
        <end position="63"/>
    </location>
</feature>
<feature type="region of interest" description="EIF4G-binding" evidence="3">
    <location>
        <begin position="70"/>
        <end position="106"/>
    </location>
</feature>
<feature type="region of interest" description="EIF4G-binding" evidence="3">
    <location>
        <begin position="154"/>
        <end position="163"/>
    </location>
</feature>
<feature type="compositionally biased region" description="Polar residues" evidence="4">
    <location>
        <begin position="8"/>
        <end position="24"/>
    </location>
</feature>
<feature type="binding site" evidence="2">
    <location>
        <begin position="78"/>
        <end position="83"/>
    </location>
    <ligand>
        <name>mRNA</name>
        <dbReference type="ChEBI" id="CHEBI:33699"/>
    </ligand>
    <ligandPart>
        <name>N(7)-methylguanosine 5'-triphosphate group</name>
        <dbReference type="ChEBI" id="CHEBI:74429"/>
        <note>m7GTP residue in mRNA cap</note>
    </ligandPart>
</feature>
<feature type="binding site" evidence="2">
    <location>
        <position position="110"/>
    </location>
    <ligand>
        <name>mRNA</name>
        <dbReference type="ChEBI" id="CHEBI:33699"/>
    </ligand>
    <ligandPart>
        <name>N(7)-methylguanosine 5'-triphosphate group</name>
        <dbReference type="ChEBI" id="CHEBI:74429"/>
        <note>m7GTP residue in mRNA cap</note>
    </ligandPart>
</feature>
<feature type="binding site" evidence="2">
    <location>
        <begin position="128"/>
        <end position="129"/>
    </location>
    <ligand>
        <name>mRNA</name>
        <dbReference type="ChEBI" id="CHEBI:33699"/>
    </ligand>
    <ligandPart>
        <name>N(7)-methylguanosine 5'-triphosphate group</name>
        <dbReference type="ChEBI" id="CHEBI:74429"/>
        <note>m7GTP residue in mRNA cap</note>
    </ligandPart>
</feature>
<feature type="binding site" evidence="2">
    <location>
        <begin position="178"/>
        <end position="183"/>
    </location>
    <ligand>
        <name>mRNA</name>
        <dbReference type="ChEBI" id="CHEBI:33699"/>
    </ligand>
    <ligandPart>
        <name>N(7)-methylguanosine 5'-triphosphate group</name>
        <dbReference type="ChEBI" id="CHEBI:74429"/>
        <note>m7GTP residue in mRNA cap</note>
    </ligandPart>
</feature>
<feature type="binding site" evidence="3">
    <location>
        <begin position="223"/>
        <end position="227"/>
    </location>
    <ligand>
        <name>mRNA</name>
        <dbReference type="ChEBI" id="CHEBI:33699"/>
    </ligand>
    <ligandPart>
        <name>N(7)-methylguanosine 5'-triphosphate group</name>
        <dbReference type="ChEBI" id="CHEBI:74429"/>
        <note>m7GTP residue in mRNA cap</note>
    </ligandPart>
</feature>
<feature type="disulfide bond" evidence="2">
    <location>
        <begin position="133"/>
        <end position="171"/>
    </location>
</feature>
<feature type="sequence variant" description="In strain: PI 595203." evidence="5">
    <original>T</original>
    <variation>P</variation>
    <location>
        <position position="81"/>
    </location>
</feature>
<proteinExistence type="evidence at protein level"/>
<protein>
    <recommendedName>
        <fullName evidence="6">Eukaryotic translation initiation factor 4E-1</fullName>
        <shortName evidence="6">eIF-4E-1</shortName>
        <shortName evidence="6">eIF4E-1</shortName>
    </recommendedName>
    <alternativeName>
        <fullName evidence="7">eIF-4F 25 kDa subunit</fullName>
    </alternativeName>
    <alternativeName>
        <fullName evidence="7">eIF-4F p26 subunit</fullName>
    </alternativeName>
    <alternativeName>
        <fullName evidence="6">mRNA cap-binding protein</fullName>
    </alternativeName>
</protein>
<comment type="function">
    <text evidence="2 5">Component of the protein complex eIF4F, which is involved in the recognition of the mRNA cap, ATP-dependent unwinding of 5'-terminal secondary structure and recruitment of mRNA to the ribosome (By similarity). Recognizes and binds the 7-methylguanosine-containing mRNA cap during an early step in the initiation of protein synthesis and facilitates ribosome binding by inducing the unwinding of the mRNAs secondary structures (By similarity). Key component of recessive resistance to potyviruses (PubMed:19820912).</text>
</comment>
<comment type="function">
    <text evidence="5">(Microbial infection) Susceptibility host factor required for viral infection by recruiting viral RNAs to the host ribosomal complex via an interaction with viral genome-linked protein (VPg).</text>
</comment>
<comment type="subunit">
    <text evidence="2">EIF4F is a multi-subunit complex, the composition of which varies with external and internal environmental conditions. It is composed of at least EIF4A, EIF4E and EIF4G. EIF4E is also known to interact with other partners. In higher plants two isoforms of EIF4F have been identified, named isoform EIF4F and isoform EIF(iso)4F. Isoform EIF4F has subunits p220 and p26, whereas isoform EIF(iso)4F has subunits p82 and p28.</text>
</comment>
<comment type="subunit">
    <text evidence="8">(Microbial infection) Interacts with potyvirus viral genome-linked protein (VPg); this interaction is possible in susceptible hosts but impaired in resistant plants.</text>
</comment>
<comment type="subcellular location">
    <subcellularLocation>
        <location evidence="1">Nucleus</location>
    </subcellularLocation>
    <subcellularLocation>
        <location evidence="1">Cytoplasm</location>
    </subcellularLocation>
</comment>
<comment type="PTM">
    <text evidence="2">According to the redox status, the Cys-133-Cys-171 disulfide bridge may have a role in regulating protein function by affecting its ability to bind capped mRNA.</text>
</comment>
<comment type="polymorphism">
    <text evidence="5">Variant present in the strains cv. PI 595203 confers resistance to zucchini yellow mosaic virus (ZYMV).</text>
</comment>
<comment type="miscellaneous">
    <text evidence="8">Displayed sequence is cv. New Hampshire Midget and confers susceptibility to zucchini yellow mosaic virus (ZYMV).</text>
</comment>
<comment type="similarity">
    <text evidence="7">Belongs to the eukaryotic initiation factor 4E family.</text>
</comment>
<keyword id="KW-0963">Cytoplasm</keyword>
<keyword id="KW-1015">Disulfide bond</keyword>
<keyword id="KW-0945">Host-virus interaction</keyword>
<keyword id="KW-0396">Initiation factor</keyword>
<keyword id="KW-0539">Nucleus</keyword>
<keyword id="KW-0611">Plant defense</keyword>
<keyword id="KW-0648">Protein biosynthesis</keyword>
<keyword id="KW-0694">RNA-binding</keyword>
<keyword id="KW-0810">Translation regulation</keyword>
<accession>C7SG33</accession>
<accession>C7SG34</accession>
<dbReference type="EMBL" id="FJ184033">
    <property type="protein sequence ID" value="ACN51299.1"/>
    <property type="molecule type" value="Genomic_DNA"/>
</dbReference>
<dbReference type="EMBL" id="FJ184034">
    <property type="protein sequence ID" value="ACN51300.1"/>
    <property type="molecule type" value="Genomic_DNA"/>
</dbReference>
<dbReference type="EMBL" id="FJ184035">
    <property type="protein sequence ID" value="ACN51301.1"/>
    <property type="molecule type" value="mRNA"/>
</dbReference>
<dbReference type="EMBL" id="FJ184036">
    <property type="protein sequence ID" value="ACN51302.1"/>
    <property type="molecule type" value="mRNA"/>
</dbReference>
<dbReference type="EMBL" id="KJ468030">
    <property type="protein sequence ID" value="AJA90795.1"/>
    <property type="molecule type" value="Genomic_DNA"/>
</dbReference>
<dbReference type="SMR" id="C7SG33"/>
<dbReference type="EnsemblPlants" id="Cla97C03G058500.1">
    <property type="protein sequence ID" value="Cla97C03G058500.1"/>
    <property type="gene ID" value="Cla97C03G058500"/>
</dbReference>
<dbReference type="Gramene" id="Cla97C03G058500.1">
    <property type="protein sequence ID" value="Cla97C03G058500.1"/>
    <property type="gene ID" value="Cla97C03G058500"/>
</dbReference>
<dbReference type="GO" id="GO:0005737">
    <property type="term" value="C:cytoplasm"/>
    <property type="evidence" value="ECO:0000250"/>
    <property type="project" value="UniProtKB"/>
</dbReference>
<dbReference type="GO" id="GO:0016281">
    <property type="term" value="C:eukaryotic translation initiation factor 4F complex"/>
    <property type="evidence" value="ECO:0007669"/>
    <property type="project" value="TreeGrafter"/>
</dbReference>
<dbReference type="GO" id="GO:0005634">
    <property type="term" value="C:nucleus"/>
    <property type="evidence" value="ECO:0000250"/>
    <property type="project" value="UniProtKB"/>
</dbReference>
<dbReference type="GO" id="GO:0000340">
    <property type="term" value="F:RNA 7-methylguanosine cap binding"/>
    <property type="evidence" value="ECO:0007669"/>
    <property type="project" value="TreeGrafter"/>
</dbReference>
<dbReference type="GO" id="GO:0003723">
    <property type="term" value="F:RNA binding"/>
    <property type="evidence" value="ECO:0000250"/>
    <property type="project" value="UniProtKB"/>
</dbReference>
<dbReference type="GO" id="GO:0003743">
    <property type="term" value="F:translation initiation factor activity"/>
    <property type="evidence" value="ECO:0000250"/>
    <property type="project" value="UniProtKB"/>
</dbReference>
<dbReference type="GO" id="GO:0051607">
    <property type="term" value="P:defense response to virus"/>
    <property type="evidence" value="ECO:0000315"/>
    <property type="project" value="UniProtKB"/>
</dbReference>
<dbReference type="GO" id="GO:0006417">
    <property type="term" value="P:regulation of translation"/>
    <property type="evidence" value="ECO:0007669"/>
    <property type="project" value="UniProtKB-KW"/>
</dbReference>
<dbReference type="GO" id="GO:0006413">
    <property type="term" value="P:translational initiation"/>
    <property type="evidence" value="ECO:0000250"/>
    <property type="project" value="UniProtKB"/>
</dbReference>
<dbReference type="FunFam" id="3.30.760.10:FF:000003">
    <property type="entry name" value="Eukaryotic translation initiation factor 4E"/>
    <property type="match status" value="1"/>
</dbReference>
<dbReference type="Gene3D" id="3.30.760.10">
    <property type="entry name" value="RNA Cap, Translation Initiation Factor Eif4e"/>
    <property type="match status" value="1"/>
</dbReference>
<dbReference type="InterPro" id="IPR023398">
    <property type="entry name" value="TIF_eIF4e-like"/>
</dbReference>
<dbReference type="InterPro" id="IPR001040">
    <property type="entry name" value="TIF_eIF_4E"/>
</dbReference>
<dbReference type="InterPro" id="IPR019770">
    <property type="entry name" value="TIF_eIF_4E_CS"/>
</dbReference>
<dbReference type="PANTHER" id="PTHR11960">
    <property type="entry name" value="EUKARYOTIC TRANSLATION INITIATION FACTOR 4E RELATED"/>
    <property type="match status" value="1"/>
</dbReference>
<dbReference type="PANTHER" id="PTHR11960:SF8">
    <property type="entry name" value="EUKARYOTIC TRANSLATION INITIATION FACTOR 4E1-RELATED"/>
    <property type="match status" value="1"/>
</dbReference>
<dbReference type="Pfam" id="PF01652">
    <property type="entry name" value="IF4E"/>
    <property type="match status" value="1"/>
</dbReference>
<dbReference type="SUPFAM" id="SSF55418">
    <property type="entry name" value="eIF4e-like"/>
    <property type="match status" value="1"/>
</dbReference>
<dbReference type="PROSITE" id="PS00813">
    <property type="entry name" value="IF4E"/>
    <property type="match status" value="1"/>
</dbReference>